<keyword id="KW-1003">Cell membrane</keyword>
<keyword id="KW-0472">Membrane</keyword>
<keyword id="KW-0812">Transmembrane</keyword>
<keyword id="KW-1133">Transmembrane helix</keyword>
<feature type="chain" id="PRO_0000232564" description="Flotillin-like protein FloA">
    <location>
        <begin position="1"/>
        <end position="329"/>
    </location>
</feature>
<feature type="transmembrane region" description="Helical" evidence="1">
    <location>
        <begin position="6"/>
        <end position="26"/>
    </location>
</feature>
<feature type="transmembrane region" description="Helical" evidence="1">
    <location>
        <begin position="27"/>
        <end position="47"/>
    </location>
</feature>
<reference key="1">
    <citation type="journal article" date="2002" name="Lancet">
        <title>Genome and virulence determinants of high virulence community-acquired MRSA.</title>
        <authorList>
            <person name="Baba T."/>
            <person name="Takeuchi F."/>
            <person name="Kuroda M."/>
            <person name="Yuzawa H."/>
            <person name="Aoki K."/>
            <person name="Oguchi A."/>
            <person name="Nagai Y."/>
            <person name="Iwama N."/>
            <person name="Asano K."/>
            <person name="Naimi T."/>
            <person name="Kuroda H."/>
            <person name="Cui L."/>
            <person name="Yamamoto K."/>
            <person name="Hiramatsu K."/>
        </authorList>
    </citation>
    <scope>NUCLEOTIDE SEQUENCE [LARGE SCALE GENOMIC DNA]</scope>
    <source>
        <strain>MW2</strain>
    </source>
</reference>
<protein>
    <recommendedName>
        <fullName evidence="1">Flotillin-like protein FloA</fullName>
    </recommendedName>
</protein>
<dbReference type="EMBL" id="BA000033">
    <property type="protein sequence ID" value="BAB95390.1"/>
    <property type="molecule type" value="Genomic_DNA"/>
</dbReference>
<dbReference type="RefSeq" id="WP_000492114.1">
    <property type="nucleotide sequence ID" value="NC_003923.1"/>
</dbReference>
<dbReference type="SMR" id="Q8NWB3"/>
<dbReference type="GeneID" id="98345944"/>
<dbReference type="KEGG" id="sam:MW1525"/>
<dbReference type="HOGENOM" id="CLU_836378_0_0_9"/>
<dbReference type="GO" id="GO:0045121">
    <property type="term" value="C:membrane raft"/>
    <property type="evidence" value="ECO:0007669"/>
    <property type="project" value="UniProtKB-SubCell"/>
</dbReference>
<dbReference type="GO" id="GO:0005886">
    <property type="term" value="C:plasma membrane"/>
    <property type="evidence" value="ECO:0007669"/>
    <property type="project" value="UniProtKB-SubCell"/>
</dbReference>
<dbReference type="HAMAP" id="MF_01562">
    <property type="entry name" value="FloA"/>
    <property type="match status" value="1"/>
</dbReference>
<dbReference type="InterPro" id="IPR022853">
    <property type="entry name" value="FloA"/>
</dbReference>
<dbReference type="NCBIfam" id="NF010186">
    <property type="entry name" value="PRK13665.1"/>
    <property type="match status" value="1"/>
</dbReference>
<dbReference type="Pfam" id="PF12127">
    <property type="entry name" value="FloA"/>
    <property type="match status" value="1"/>
</dbReference>
<gene>
    <name evidence="1" type="primary">floA</name>
    <name type="ordered locus">MW1525</name>
</gene>
<name>FLOA_STAAW</name>
<sequence length="329" mass="35181">MFSLSFIVIAVIIVVALLILFSFVPIGLWISALAAGVHVGIGTLVGMRLRRVSPRKVIAPLIKAHKAGLALTTNQLESHYLAGGNVDRVVDANIAAQRADIDLPFERAAAIDLAGRDVLEAVQMSVNPKVIETPFIAGVAMNGIEVKAKARITVRANIARLVGGAGEETIIARVGEGIVSTIGSSKHHTEVLENPDNISKTVLSKGLDSGTAFEILSIDIADVDISKNIGADLQTEQALADKNIAQAKAEERRAMAVATEQEMKARVQEMHAKVVEAESEVPLAMAEALRSGNISVKDYYNLKNIEADTGMRNAINKRTDQSDDESPEH</sequence>
<proteinExistence type="inferred from homology"/>
<evidence type="ECO:0000255" key="1">
    <source>
        <dbReference type="HAMAP-Rule" id="MF_01562"/>
    </source>
</evidence>
<accession>Q8NWB3</accession>
<organism>
    <name type="scientific">Staphylococcus aureus (strain MW2)</name>
    <dbReference type="NCBI Taxonomy" id="196620"/>
    <lineage>
        <taxon>Bacteria</taxon>
        <taxon>Bacillati</taxon>
        <taxon>Bacillota</taxon>
        <taxon>Bacilli</taxon>
        <taxon>Bacillales</taxon>
        <taxon>Staphylococcaceae</taxon>
        <taxon>Staphylococcus</taxon>
    </lineage>
</organism>
<comment type="function">
    <text evidence="1">Found in functional membrane microdomains (FMM) that may be equivalent to eukaryotic membrane rafts. FMMs are highly dynamic and increase in number as cells age. Flotillins are thought to be important factors in membrane fluidity.</text>
</comment>
<comment type="subunit">
    <text evidence="1">Homooligomerizes.</text>
</comment>
<comment type="subcellular location">
    <subcellularLocation>
        <location evidence="1">Cell membrane</location>
        <topology evidence="1">Multi-pass membrane protein</topology>
    </subcellularLocation>
    <subcellularLocation>
        <location evidence="1">Membrane raft</location>
        <topology evidence="1">Multi-pass membrane protein</topology>
    </subcellularLocation>
</comment>
<comment type="similarity">
    <text evidence="1">Belongs to the flotillin-like FloA family.</text>
</comment>